<reference key="1">
    <citation type="journal article" date="2003" name="Mol. Phylogenet. Evol.">
        <title>The status of the Japanese and East Asian bats of the genus Myotis (Vespertilionidae) based on mitochondrial sequences.</title>
        <authorList>
            <person name="Kawai K."/>
            <person name="Nikaido M."/>
            <person name="Harada M."/>
            <person name="Matsumura S."/>
            <person name="Lin L."/>
            <person name="Wu Y."/>
            <person name="Hasegawa M."/>
            <person name="Okada N."/>
        </authorList>
    </citation>
    <scope>NUCLEOTIDE SEQUENCE [GENOMIC DNA]</scope>
    <source>
        <strain>Isolate KM12985</strain>
    </source>
</reference>
<organism>
    <name type="scientific">Myotis frater</name>
    <name type="common">Long-tailed bat</name>
    <name type="synonym">Fraternal bat</name>
    <dbReference type="NCBI Taxonomy" id="187012"/>
    <lineage>
        <taxon>Eukaryota</taxon>
        <taxon>Metazoa</taxon>
        <taxon>Chordata</taxon>
        <taxon>Craniata</taxon>
        <taxon>Vertebrata</taxon>
        <taxon>Euteleostomi</taxon>
        <taxon>Mammalia</taxon>
        <taxon>Eutheria</taxon>
        <taxon>Laurasiatheria</taxon>
        <taxon>Chiroptera</taxon>
        <taxon>Yangochiroptera</taxon>
        <taxon>Vespertilionidae</taxon>
        <taxon>Myotis</taxon>
    </lineage>
</organism>
<gene>
    <name type="primary">MT-CYB</name>
    <name type="synonym">COB</name>
    <name type="synonym">CYTB</name>
    <name type="synonym">MTCYB</name>
</gene>
<proteinExistence type="inferred from homology"/>
<comment type="function">
    <text evidence="2">Component of the ubiquinol-cytochrome c reductase complex (complex III or cytochrome b-c1 complex) that is part of the mitochondrial respiratory chain. The b-c1 complex mediates electron transfer from ubiquinol to cytochrome c. Contributes to the generation of a proton gradient across the mitochondrial membrane that is then used for ATP synthesis.</text>
</comment>
<comment type="cofactor">
    <cofactor evidence="2">
        <name>heme b</name>
        <dbReference type="ChEBI" id="CHEBI:60344"/>
    </cofactor>
    <text evidence="2">Binds 2 heme b groups non-covalently.</text>
</comment>
<comment type="subunit">
    <text evidence="2">The cytochrome bc1 complex contains 11 subunits: 3 respiratory subunits (MT-CYB, CYC1 and UQCRFS1), 2 core proteins (UQCRC1 and UQCRC2) and 6 low-molecular weight proteins (UQCRH/QCR6, UQCRB/QCR7, UQCRQ/QCR8, UQCR10/QCR9, UQCR11/QCR10 and a cleavage product of UQCRFS1). This cytochrome bc1 complex then forms a dimer.</text>
</comment>
<comment type="subcellular location">
    <subcellularLocation>
        <location evidence="2">Mitochondrion inner membrane</location>
        <topology evidence="2">Multi-pass membrane protein</topology>
    </subcellularLocation>
</comment>
<comment type="miscellaneous">
    <text evidence="1">Heme 1 (or BL or b562) is low-potential and absorbs at about 562 nm, and heme 2 (or BH or b566) is high-potential and absorbs at about 566 nm.</text>
</comment>
<comment type="similarity">
    <text evidence="3 4">Belongs to the cytochrome b family.</text>
</comment>
<comment type="caution">
    <text evidence="2">The full-length protein contains only eight transmembrane helices, not nine as predicted by bioinformatics tools.</text>
</comment>
<protein>
    <recommendedName>
        <fullName>Cytochrome b</fullName>
    </recommendedName>
    <alternativeName>
        <fullName>Complex III subunit 3</fullName>
    </alternativeName>
    <alternativeName>
        <fullName>Complex III subunit III</fullName>
    </alternativeName>
    <alternativeName>
        <fullName>Cytochrome b-c1 complex subunit 3</fullName>
    </alternativeName>
    <alternativeName>
        <fullName>Ubiquinol-cytochrome-c reductase complex cytochrome b subunit</fullName>
    </alternativeName>
</protein>
<accession>Q7Y8L4</accession>
<sequence length="379" mass="42714">MTNIRKSHPLMKIINSSFIDLPAPSNISSWWNFGSLLGICLALQIMTGLFLAMHYTSDTATAFNSVTHICRDVNYGWILRYLHANGASMFFICLYLHVGRGLYYGSYLYKETWNIGVILLFAVMATAFMGYVLPWGQMSFWGATVITNLLSAIPYIGTNLVEWIWGGFSVDKATLTRFFAFHFLLPFVIAAMVMVHLLFLHETGSNNPTGIPSNADMIPFHPYYTIKDILGLLLMIMTLLMLVLFSPDMLGDPDNYTPANPLSTPPHIKPEWYFLFAYAILRSIPNKLGGVLALVLSILILIIIPLLHTSKQRSMAFRPLSQCLYWLLVADLLTLTWIGGQPVEYPFVIIGQLASILYFSIIIILMPLASLAENHLLKW</sequence>
<geneLocation type="mitochondrion"/>
<feature type="chain" id="PRO_0000061238" description="Cytochrome b">
    <location>
        <begin position="1"/>
        <end position="379"/>
    </location>
</feature>
<feature type="transmembrane region" description="Helical" evidence="2">
    <location>
        <begin position="33"/>
        <end position="53"/>
    </location>
</feature>
<feature type="transmembrane region" description="Helical" evidence="2">
    <location>
        <begin position="77"/>
        <end position="98"/>
    </location>
</feature>
<feature type="transmembrane region" description="Helical" evidence="2">
    <location>
        <begin position="113"/>
        <end position="133"/>
    </location>
</feature>
<feature type="transmembrane region" description="Helical" evidence="2">
    <location>
        <begin position="178"/>
        <end position="198"/>
    </location>
</feature>
<feature type="transmembrane region" description="Helical" evidence="2">
    <location>
        <begin position="226"/>
        <end position="246"/>
    </location>
</feature>
<feature type="transmembrane region" description="Helical" evidence="2">
    <location>
        <begin position="288"/>
        <end position="308"/>
    </location>
</feature>
<feature type="transmembrane region" description="Helical" evidence="2">
    <location>
        <begin position="320"/>
        <end position="340"/>
    </location>
</feature>
<feature type="transmembrane region" description="Helical" evidence="2">
    <location>
        <begin position="347"/>
        <end position="367"/>
    </location>
</feature>
<feature type="binding site" description="axial binding residue" evidence="2">
    <location>
        <position position="83"/>
    </location>
    <ligand>
        <name>heme b</name>
        <dbReference type="ChEBI" id="CHEBI:60344"/>
        <label>b562</label>
    </ligand>
    <ligandPart>
        <name>Fe</name>
        <dbReference type="ChEBI" id="CHEBI:18248"/>
    </ligandPart>
</feature>
<feature type="binding site" description="axial binding residue" evidence="2">
    <location>
        <position position="97"/>
    </location>
    <ligand>
        <name>heme b</name>
        <dbReference type="ChEBI" id="CHEBI:60344"/>
        <label>b566</label>
    </ligand>
    <ligandPart>
        <name>Fe</name>
        <dbReference type="ChEBI" id="CHEBI:18248"/>
    </ligandPart>
</feature>
<feature type="binding site" description="axial binding residue" evidence="2">
    <location>
        <position position="182"/>
    </location>
    <ligand>
        <name>heme b</name>
        <dbReference type="ChEBI" id="CHEBI:60344"/>
        <label>b562</label>
    </ligand>
    <ligandPart>
        <name>Fe</name>
        <dbReference type="ChEBI" id="CHEBI:18248"/>
    </ligandPart>
</feature>
<feature type="binding site" description="axial binding residue" evidence="2">
    <location>
        <position position="196"/>
    </location>
    <ligand>
        <name>heme b</name>
        <dbReference type="ChEBI" id="CHEBI:60344"/>
        <label>b566</label>
    </ligand>
    <ligandPart>
        <name>Fe</name>
        <dbReference type="ChEBI" id="CHEBI:18248"/>
    </ligandPart>
</feature>
<feature type="binding site" evidence="2">
    <location>
        <position position="201"/>
    </location>
    <ligand>
        <name>a ubiquinone</name>
        <dbReference type="ChEBI" id="CHEBI:16389"/>
    </ligand>
</feature>
<name>CYB_MYOFR</name>
<keyword id="KW-0249">Electron transport</keyword>
<keyword id="KW-0349">Heme</keyword>
<keyword id="KW-0408">Iron</keyword>
<keyword id="KW-0472">Membrane</keyword>
<keyword id="KW-0479">Metal-binding</keyword>
<keyword id="KW-0496">Mitochondrion</keyword>
<keyword id="KW-0999">Mitochondrion inner membrane</keyword>
<keyword id="KW-0679">Respiratory chain</keyword>
<keyword id="KW-0812">Transmembrane</keyword>
<keyword id="KW-1133">Transmembrane helix</keyword>
<keyword id="KW-0813">Transport</keyword>
<keyword id="KW-0830">Ubiquinone</keyword>
<dbReference type="EMBL" id="AB106593">
    <property type="protein sequence ID" value="BAC77799.1"/>
    <property type="molecule type" value="Genomic_DNA"/>
</dbReference>
<dbReference type="SMR" id="Q7Y8L4"/>
<dbReference type="GO" id="GO:0005743">
    <property type="term" value="C:mitochondrial inner membrane"/>
    <property type="evidence" value="ECO:0007669"/>
    <property type="project" value="UniProtKB-SubCell"/>
</dbReference>
<dbReference type="GO" id="GO:0045275">
    <property type="term" value="C:respiratory chain complex III"/>
    <property type="evidence" value="ECO:0007669"/>
    <property type="project" value="InterPro"/>
</dbReference>
<dbReference type="GO" id="GO:0046872">
    <property type="term" value="F:metal ion binding"/>
    <property type="evidence" value="ECO:0007669"/>
    <property type="project" value="UniProtKB-KW"/>
</dbReference>
<dbReference type="GO" id="GO:0008121">
    <property type="term" value="F:ubiquinol-cytochrome-c reductase activity"/>
    <property type="evidence" value="ECO:0007669"/>
    <property type="project" value="InterPro"/>
</dbReference>
<dbReference type="GO" id="GO:0006122">
    <property type="term" value="P:mitochondrial electron transport, ubiquinol to cytochrome c"/>
    <property type="evidence" value="ECO:0007669"/>
    <property type="project" value="TreeGrafter"/>
</dbReference>
<dbReference type="CDD" id="cd00290">
    <property type="entry name" value="cytochrome_b_C"/>
    <property type="match status" value="1"/>
</dbReference>
<dbReference type="CDD" id="cd00284">
    <property type="entry name" value="Cytochrome_b_N"/>
    <property type="match status" value="1"/>
</dbReference>
<dbReference type="FunFam" id="1.20.810.10:FF:000002">
    <property type="entry name" value="Cytochrome b"/>
    <property type="match status" value="1"/>
</dbReference>
<dbReference type="Gene3D" id="1.20.810.10">
    <property type="entry name" value="Cytochrome Bc1 Complex, Chain C"/>
    <property type="match status" value="1"/>
</dbReference>
<dbReference type="InterPro" id="IPR005798">
    <property type="entry name" value="Cyt_b/b6_C"/>
</dbReference>
<dbReference type="InterPro" id="IPR036150">
    <property type="entry name" value="Cyt_b/b6_C_sf"/>
</dbReference>
<dbReference type="InterPro" id="IPR005797">
    <property type="entry name" value="Cyt_b/b6_N"/>
</dbReference>
<dbReference type="InterPro" id="IPR027387">
    <property type="entry name" value="Cytb/b6-like_sf"/>
</dbReference>
<dbReference type="InterPro" id="IPR030689">
    <property type="entry name" value="Cytochrome_b"/>
</dbReference>
<dbReference type="InterPro" id="IPR048260">
    <property type="entry name" value="Cytochrome_b_C_euk/bac"/>
</dbReference>
<dbReference type="InterPro" id="IPR048259">
    <property type="entry name" value="Cytochrome_b_N_euk/bac"/>
</dbReference>
<dbReference type="InterPro" id="IPR016174">
    <property type="entry name" value="Di-haem_cyt_TM"/>
</dbReference>
<dbReference type="PANTHER" id="PTHR19271">
    <property type="entry name" value="CYTOCHROME B"/>
    <property type="match status" value="1"/>
</dbReference>
<dbReference type="PANTHER" id="PTHR19271:SF16">
    <property type="entry name" value="CYTOCHROME B"/>
    <property type="match status" value="1"/>
</dbReference>
<dbReference type="Pfam" id="PF00032">
    <property type="entry name" value="Cytochrom_B_C"/>
    <property type="match status" value="1"/>
</dbReference>
<dbReference type="Pfam" id="PF00033">
    <property type="entry name" value="Cytochrome_B"/>
    <property type="match status" value="1"/>
</dbReference>
<dbReference type="PIRSF" id="PIRSF038885">
    <property type="entry name" value="COB"/>
    <property type="match status" value="1"/>
</dbReference>
<dbReference type="SUPFAM" id="SSF81648">
    <property type="entry name" value="a domain/subunit of cytochrome bc1 complex (Ubiquinol-cytochrome c reductase)"/>
    <property type="match status" value="1"/>
</dbReference>
<dbReference type="SUPFAM" id="SSF81342">
    <property type="entry name" value="Transmembrane di-heme cytochromes"/>
    <property type="match status" value="1"/>
</dbReference>
<dbReference type="PROSITE" id="PS51003">
    <property type="entry name" value="CYTB_CTER"/>
    <property type="match status" value="1"/>
</dbReference>
<dbReference type="PROSITE" id="PS51002">
    <property type="entry name" value="CYTB_NTER"/>
    <property type="match status" value="1"/>
</dbReference>
<evidence type="ECO:0000250" key="1"/>
<evidence type="ECO:0000250" key="2">
    <source>
        <dbReference type="UniProtKB" id="P00157"/>
    </source>
</evidence>
<evidence type="ECO:0000255" key="3">
    <source>
        <dbReference type="PROSITE-ProRule" id="PRU00967"/>
    </source>
</evidence>
<evidence type="ECO:0000255" key="4">
    <source>
        <dbReference type="PROSITE-ProRule" id="PRU00968"/>
    </source>
</evidence>